<reference key="1">
    <citation type="journal article" date="2008" name="BMC Genomics">
        <title>Genome sequence and rapid evolution of the rice pathogen Xanthomonas oryzae pv. oryzae PXO99A.</title>
        <authorList>
            <person name="Salzberg S.L."/>
            <person name="Sommer D.D."/>
            <person name="Schatz M.C."/>
            <person name="Phillippy A.M."/>
            <person name="Rabinowicz P.D."/>
            <person name="Tsuge S."/>
            <person name="Furutani A."/>
            <person name="Ochiai H."/>
            <person name="Delcher A.L."/>
            <person name="Kelley D."/>
            <person name="Madupu R."/>
            <person name="Puiu D."/>
            <person name="Radune D."/>
            <person name="Shumway M."/>
            <person name="Trapnell C."/>
            <person name="Aparna G."/>
            <person name="Jha G."/>
            <person name="Pandey A."/>
            <person name="Patil P.B."/>
            <person name="Ishihara H."/>
            <person name="Meyer D.F."/>
            <person name="Szurek B."/>
            <person name="Verdier V."/>
            <person name="Koebnik R."/>
            <person name="Dow J.M."/>
            <person name="Ryan R.P."/>
            <person name="Hirata H."/>
            <person name="Tsuyumu S."/>
            <person name="Won Lee S."/>
            <person name="Seo Y.-S."/>
            <person name="Sriariyanum M."/>
            <person name="Ronald P.C."/>
            <person name="Sonti R.V."/>
            <person name="Van Sluys M.-A."/>
            <person name="Leach J.E."/>
            <person name="White F.F."/>
            <person name="Bogdanove A.J."/>
        </authorList>
    </citation>
    <scope>NUCLEOTIDE SEQUENCE [LARGE SCALE GENOMIC DNA]</scope>
    <source>
        <strain>PXO99A</strain>
    </source>
</reference>
<evidence type="ECO:0000255" key="1">
    <source>
        <dbReference type="HAMAP-Rule" id="MF_01342"/>
    </source>
</evidence>
<evidence type="ECO:0000305" key="2"/>
<name>RL16_XANOP</name>
<feature type="chain" id="PRO_1000143051" description="Large ribosomal subunit protein uL16">
    <location>
        <begin position="1"/>
        <end position="137"/>
    </location>
</feature>
<proteinExistence type="inferred from homology"/>
<gene>
    <name evidence="1" type="primary">rplP</name>
    <name type="ordered locus">PXO_04514</name>
</gene>
<protein>
    <recommendedName>
        <fullName evidence="1">Large ribosomal subunit protein uL16</fullName>
    </recommendedName>
    <alternativeName>
        <fullName evidence="2">50S ribosomal protein L16</fullName>
    </alternativeName>
</protein>
<comment type="function">
    <text evidence="1">Binds 23S rRNA and is also seen to make contacts with the A and possibly P site tRNAs.</text>
</comment>
<comment type="subunit">
    <text evidence="1">Part of the 50S ribosomal subunit.</text>
</comment>
<comment type="similarity">
    <text evidence="1">Belongs to the universal ribosomal protein uL16 family.</text>
</comment>
<dbReference type="EMBL" id="CP000967">
    <property type="protein sequence ID" value="ACD57894.1"/>
    <property type="molecule type" value="Genomic_DNA"/>
</dbReference>
<dbReference type="RefSeq" id="WP_003486706.1">
    <property type="nucleotide sequence ID" value="NC_010717.2"/>
</dbReference>
<dbReference type="SMR" id="B2SQR7"/>
<dbReference type="GeneID" id="97509343"/>
<dbReference type="KEGG" id="xop:PXO_04514"/>
<dbReference type="eggNOG" id="COG0197">
    <property type="taxonomic scope" value="Bacteria"/>
</dbReference>
<dbReference type="HOGENOM" id="CLU_078858_2_1_6"/>
<dbReference type="Proteomes" id="UP000001740">
    <property type="component" value="Chromosome"/>
</dbReference>
<dbReference type="GO" id="GO:0022625">
    <property type="term" value="C:cytosolic large ribosomal subunit"/>
    <property type="evidence" value="ECO:0007669"/>
    <property type="project" value="TreeGrafter"/>
</dbReference>
<dbReference type="GO" id="GO:0019843">
    <property type="term" value="F:rRNA binding"/>
    <property type="evidence" value="ECO:0007669"/>
    <property type="project" value="UniProtKB-UniRule"/>
</dbReference>
<dbReference type="GO" id="GO:0003735">
    <property type="term" value="F:structural constituent of ribosome"/>
    <property type="evidence" value="ECO:0007669"/>
    <property type="project" value="InterPro"/>
</dbReference>
<dbReference type="GO" id="GO:0000049">
    <property type="term" value="F:tRNA binding"/>
    <property type="evidence" value="ECO:0007669"/>
    <property type="project" value="UniProtKB-KW"/>
</dbReference>
<dbReference type="GO" id="GO:0006412">
    <property type="term" value="P:translation"/>
    <property type="evidence" value="ECO:0007669"/>
    <property type="project" value="UniProtKB-UniRule"/>
</dbReference>
<dbReference type="CDD" id="cd01433">
    <property type="entry name" value="Ribosomal_L16_L10e"/>
    <property type="match status" value="1"/>
</dbReference>
<dbReference type="FunFam" id="3.90.1170.10:FF:000001">
    <property type="entry name" value="50S ribosomal protein L16"/>
    <property type="match status" value="1"/>
</dbReference>
<dbReference type="Gene3D" id="3.90.1170.10">
    <property type="entry name" value="Ribosomal protein L10e/L16"/>
    <property type="match status" value="1"/>
</dbReference>
<dbReference type="HAMAP" id="MF_01342">
    <property type="entry name" value="Ribosomal_uL16"/>
    <property type="match status" value="1"/>
</dbReference>
<dbReference type="InterPro" id="IPR047873">
    <property type="entry name" value="Ribosomal_uL16"/>
</dbReference>
<dbReference type="InterPro" id="IPR000114">
    <property type="entry name" value="Ribosomal_uL16_bact-type"/>
</dbReference>
<dbReference type="InterPro" id="IPR020798">
    <property type="entry name" value="Ribosomal_uL16_CS"/>
</dbReference>
<dbReference type="InterPro" id="IPR016180">
    <property type="entry name" value="Ribosomal_uL16_dom"/>
</dbReference>
<dbReference type="InterPro" id="IPR036920">
    <property type="entry name" value="Ribosomal_uL16_sf"/>
</dbReference>
<dbReference type="NCBIfam" id="TIGR01164">
    <property type="entry name" value="rplP_bact"/>
    <property type="match status" value="1"/>
</dbReference>
<dbReference type="PANTHER" id="PTHR12220">
    <property type="entry name" value="50S/60S RIBOSOMAL PROTEIN L16"/>
    <property type="match status" value="1"/>
</dbReference>
<dbReference type="PANTHER" id="PTHR12220:SF13">
    <property type="entry name" value="LARGE RIBOSOMAL SUBUNIT PROTEIN UL16M"/>
    <property type="match status" value="1"/>
</dbReference>
<dbReference type="Pfam" id="PF00252">
    <property type="entry name" value="Ribosomal_L16"/>
    <property type="match status" value="1"/>
</dbReference>
<dbReference type="PRINTS" id="PR00060">
    <property type="entry name" value="RIBOSOMALL16"/>
</dbReference>
<dbReference type="SUPFAM" id="SSF54686">
    <property type="entry name" value="Ribosomal protein L16p/L10e"/>
    <property type="match status" value="1"/>
</dbReference>
<dbReference type="PROSITE" id="PS00586">
    <property type="entry name" value="RIBOSOMAL_L16_1"/>
    <property type="match status" value="1"/>
</dbReference>
<dbReference type="PROSITE" id="PS00701">
    <property type="entry name" value="RIBOSOMAL_L16_2"/>
    <property type="match status" value="1"/>
</dbReference>
<keyword id="KW-0687">Ribonucleoprotein</keyword>
<keyword id="KW-0689">Ribosomal protein</keyword>
<keyword id="KW-0694">RNA-binding</keyword>
<keyword id="KW-0699">rRNA-binding</keyword>
<keyword id="KW-0820">tRNA-binding</keyword>
<sequence>MLQPKRTKYRKMHKGRNDGLAWSGNAVSFGEYGLKATAHGQLTARQIEAARRTISRHVKKGGKMWIRVFPDKPITKKPIEVRMGSGKGNVEYWVAQIQPGRMIYEIEGIPEETAREAFRLAAAKLSVTTTFVTRTVR</sequence>
<organism>
    <name type="scientific">Xanthomonas oryzae pv. oryzae (strain PXO99A)</name>
    <dbReference type="NCBI Taxonomy" id="360094"/>
    <lineage>
        <taxon>Bacteria</taxon>
        <taxon>Pseudomonadati</taxon>
        <taxon>Pseudomonadota</taxon>
        <taxon>Gammaproteobacteria</taxon>
        <taxon>Lysobacterales</taxon>
        <taxon>Lysobacteraceae</taxon>
        <taxon>Xanthomonas</taxon>
    </lineage>
</organism>
<accession>B2SQR7</accession>